<feature type="chain" id="PRO_0000054232" description="Arginine/agmatine antiporter">
    <location>
        <begin position="1"/>
        <end position="445"/>
    </location>
</feature>
<feature type="topological domain" description="Cytoplasmic" evidence="1">
    <location>
        <begin position="1"/>
        <end position="12"/>
    </location>
</feature>
<feature type="transmembrane region" description="Helical" evidence="8">
    <location>
        <begin position="13"/>
        <end position="24"/>
    </location>
</feature>
<feature type="topological domain" description="Periplasmic" evidence="1">
    <location>
        <begin position="25"/>
        <end position="42"/>
    </location>
</feature>
<feature type="transmembrane region" description="Helical" evidence="8">
    <location>
        <begin position="43"/>
        <end position="61"/>
    </location>
</feature>
<feature type="topological domain" description="Cytoplasmic" evidence="1">
    <location>
        <begin position="62"/>
        <end position="86"/>
    </location>
</feature>
<feature type="transmembrane region" description="Helical" evidence="8">
    <location>
        <begin position="87"/>
        <end position="112"/>
    </location>
</feature>
<feature type="topological domain" description="Periplasmic" evidence="1">
    <location>
        <begin position="113"/>
        <end position="124"/>
    </location>
</feature>
<feature type="transmembrane region" description="Helical" evidence="8">
    <location>
        <begin position="125"/>
        <end position="142"/>
    </location>
</feature>
<feature type="topological domain" description="Cytoplasmic" evidence="1">
    <location>
        <position position="143"/>
    </location>
</feature>
<feature type="transmembrane region" description="Helical" evidence="8">
    <location>
        <begin position="144"/>
        <end position="171"/>
    </location>
</feature>
<feature type="topological domain" description="Periplasmic" evidence="1">
    <location>
        <begin position="172"/>
        <end position="194"/>
    </location>
</feature>
<feature type="transmembrane region" description="Helical" evidence="8">
    <location>
        <begin position="195"/>
        <end position="207"/>
    </location>
</feature>
<feature type="topological domain" description="Cytoplasmic" evidence="1">
    <location>
        <begin position="208"/>
        <end position="226"/>
    </location>
</feature>
<feature type="transmembrane region" description="Helical" evidence="8">
    <location>
        <begin position="227"/>
        <end position="247"/>
    </location>
</feature>
<feature type="topological domain" description="Periplasmic" evidence="1">
    <location>
        <begin position="248"/>
        <end position="277"/>
    </location>
</feature>
<feature type="transmembrane region" description="Helical" evidence="8">
    <location>
        <begin position="278"/>
        <end position="301"/>
    </location>
</feature>
<feature type="topological domain" description="Cytoplasmic" evidence="1">
    <location>
        <begin position="302"/>
        <end position="323"/>
    </location>
</feature>
<feature type="transmembrane region" description="Helical" evidence="8">
    <location>
        <begin position="324"/>
        <end position="340"/>
    </location>
</feature>
<feature type="topological domain" description="Periplasmic" evidence="1">
    <location>
        <begin position="341"/>
        <end position="352"/>
    </location>
</feature>
<feature type="transmembrane region" description="Helical" evidence="8">
    <location>
        <begin position="353"/>
        <end position="370"/>
    </location>
</feature>
<feature type="topological domain" description="Cytoplasmic" evidence="1">
    <location>
        <begin position="371"/>
        <end position="388"/>
    </location>
</feature>
<feature type="transmembrane region" description="Helical" evidence="8">
    <location>
        <begin position="389"/>
        <end position="404"/>
    </location>
</feature>
<feature type="topological domain" description="Periplasmic" evidence="1">
    <location>
        <begin position="405"/>
        <end position="407"/>
    </location>
</feature>
<feature type="transmembrane region" description="Helical" evidence="8">
    <location>
        <begin position="408"/>
        <end position="426"/>
    </location>
</feature>
<feature type="topological domain" description="Cytoplasmic" evidence="1">
    <location>
        <begin position="427"/>
        <end position="445"/>
    </location>
</feature>
<feature type="short sequence motif" description="Helix-breaking GSG motif TM1" evidence="2 3">
    <location>
        <begin position="25"/>
        <end position="27"/>
    </location>
</feature>
<feature type="short sequence motif" description="Helix-breaking GVESA motif TM6" evidence="2 3">
    <location>
        <begin position="206"/>
        <end position="210"/>
    </location>
</feature>
<feature type="binding site" evidence="3 8">
    <location>
        <position position="23"/>
    </location>
    <ligand>
        <name>L-arginine</name>
        <dbReference type="ChEBI" id="CHEBI:32682"/>
    </ligand>
</feature>
<feature type="binding site" evidence="3 8">
    <location>
        <position position="26"/>
    </location>
    <ligand>
        <name>L-arginine</name>
        <dbReference type="ChEBI" id="CHEBI:32682"/>
    </ligand>
</feature>
<feature type="binding site" evidence="3 8">
    <location>
        <position position="27"/>
    </location>
    <ligand>
        <name>L-arginine</name>
        <dbReference type="ChEBI" id="CHEBI:32682"/>
    </ligand>
</feature>
<feature type="binding site" evidence="3 8">
    <location>
        <position position="96"/>
    </location>
    <ligand>
        <name>L-arginine</name>
        <dbReference type="ChEBI" id="CHEBI:32682"/>
    </ligand>
</feature>
<feature type="binding site" evidence="3 8">
    <location>
        <position position="97"/>
    </location>
    <ligand>
        <name>L-arginine</name>
        <dbReference type="ChEBI" id="CHEBI:32682"/>
    </ligand>
</feature>
<feature type="binding site" evidence="3">
    <location>
        <position position="101"/>
    </location>
    <ligand>
        <name>L-arginine</name>
        <dbReference type="ChEBI" id="CHEBI:32682"/>
    </ligand>
</feature>
<feature type="binding site" evidence="3 8">
    <location>
        <position position="202"/>
    </location>
    <ligand>
        <name>L-arginine</name>
        <dbReference type="ChEBI" id="CHEBI:32682"/>
    </ligand>
</feature>
<feature type="binding site" evidence="3">
    <location>
        <position position="205"/>
    </location>
    <ligand>
        <name>L-arginine</name>
        <dbReference type="ChEBI" id="CHEBI:32682"/>
    </ligand>
</feature>
<feature type="binding site" evidence="3 8">
    <location>
        <position position="293"/>
    </location>
    <ligand>
        <name>L-arginine</name>
        <dbReference type="ChEBI" id="CHEBI:32682"/>
    </ligand>
</feature>
<feature type="binding site" evidence="3">
    <location>
        <position position="357"/>
    </location>
    <ligand>
        <name>L-arginine</name>
        <dbReference type="ChEBI" id="CHEBI:32682"/>
    </ligand>
</feature>
<feature type="site" description="Cytoplasmic (distal) gate" evidence="7">
    <location>
        <position position="93"/>
    </location>
</feature>
<feature type="site" description="Periplasmic (proximal) gate" evidence="3">
    <location>
        <position position="202"/>
    </location>
</feature>
<feature type="site" description="Cytoplasmic (distal) gate" evidence="7">
    <location>
        <position position="208"/>
    </location>
</feature>
<feature type="site" description="Middle gate" evidence="7">
    <location>
        <position position="293"/>
    </location>
</feature>
<feature type="site" description="Cytoplasmic (distal) gate" evidence="7">
    <location>
        <position position="365"/>
    </location>
</feature>
<feature type="mutagenesis site" description="No change in antiport activity, 6-fold higher affinity for Arg." evidence="2 3">
    <original>N</original>
    <variation>A</variation>
    <location>
        <position position="22"/>
    </location>
</feature>
<feature type="mutagenesis site" description="5% Agm antiport." evidence="2">
    <original>S</original>
    <variation>K</variation>
    <location>
        <position position="26"/>
    </location>
</feature>
<feature type="mutagenesis site" description="50% antiport activity at pH 6.0, 10-fold higher than wild-type antiport activity at pH 7.5, i.e. loss of pH-dependence of substrate transport. No change in binding of Arg or Agm." evidence="4">
    <original>Y</original>
    <variation>A</variation>
    <location>
        <position position="74"/>
    </location>
</feature>
<feature type="mutagenesis site" description="Loss of pH-dependence of substrate transport." evidence="4">
    <original>Y</original>
    <variation>C</variation>
    <variation>H</variation>
    <variation>L</variation>
    <variation>M</variation>
    <variation>Q</variation>
    <variation>S</variation>
    <location>
        <position position="74"/>
    </location>
</feature>
<feature type="mutagenesis site" description="Approximately wild-type antiport." evidence="4">
    <original>Y</original>
    <variation>F</variation>
    <location>
        <position position="74"/>
    </location>
</feature>
<feature type="mutagenesis site" description="Markedly reduced binding affinity for Agm but not for Arg. 50% Agm antiport." evidence="2">
    <original>Y</original>
    <variation>A</variation>
    <location>
        <position position="87"/>
    </location>
</feature>
<feature type="mutagenesis site" description="Reduced binding affinity for Arg, no binding to Agm. 25% Agm antiport." evidence="2">
    <original>Y</original>
    <variation>A</variation>
    <location>
        <position position="93"/>
    </location>
</feature>
<feature type="mutagenesis site" description="Almost no binding to both Arg and Agm. 5% Agm antiport." evidence="2">
    <original>Y</original>
    <variation>K</variation>
    <location>
        <position position="93"/>
    </location>
</feature>
<feature type="mutagenesis site" description="5-10% Agm antiport." evidence="2">
    <original>E</original>
    <variation>A</variation>
    <variation>D</variation>
    <location>
        <position position="208"/>
    </location>
</feature>
<feature type="mutagenesis site" description="Severely decreased antiport." evidence="4">
    <original>F</original>
    <variation>A</variation>
    <location>
        <position position="337"/>
    </location>
</feature>
<feature type="mutagenesis site" description="Markedly weakened binding to Arg but not to Agm. 5% Agm antiport." evidence="2">
    <original>Y</original>
    <variation>A</variation>
    <location>
        <position position="365"/>
    </location>
</feature>
<feature type="helix" evidence="11">
    <location>
        <begin position="12"/>
        <end position="23"/>
    </location>
</feature>
<feature type="helix" evidence="11">
    <location>
        <begin position="27"/>
        <end position="38"/>
    </location>
</feature>
<feature type="helix" evidence="11">
    <location>
        <begin position="41"/>
        <end position="66"/>
    </location>
</feature>
<feature type="turn" evidence="11">
    <location>
        <begin position="70"/>
        <end position="72"/>
    </location>
</feature>
<feature type="helix" evidence="11">
    <location>
        <begin position="73"/>
        <end position="80"/>
    </location>
</feature>
<feature type="helix" evidence="11">
    <location>
        <begin position="83"/>
        <end position="111"/>
    </location>
</feature>
<feature type="turn" evidence="11">
    <location>
        <begin position="112"/>
        <end position="115"/>
    </location>
</feature>
<feature type="helix" evidence="11">
    <location>
        <begin position="117"/>
        <end position="120"/>
    </location>
</feature>
<feature type="helix" evidence="11">
    <location>
        <begin position="122"/>
        <end position="142"/>
    </location>
</feature>
<feature type="helix" evidence="11">
    <location>
        <begin position="144"/>
        <end position="167"/>
    </location>
</feature>
<feature type="helix" evidence="11">
    <location>
        <begin position="193"/>
        <end position="202"/>
    </location>
</feature>
<feature type="turn" evidence="11">
    <location>
        <begin position="203"/>
        <end position="208"/>
    </location>
</feature>
<feature type="helix" evidence="11">
    <location>
        <begin position="209"/>
        <end position="212"/>
    </location>
</feature>
<feature type="helix" evidence="11">
    <location>
        <begin position="213"/>
        <end position="216"/>
    </location>
</feature>
<feature type="strand" evidence="11">
    <location>
        <begin position="217"/>
        <end position="219"/>
    </location>
</feature>
<feature type="helix" evidence="11">
    <location>
        <begin position="220"/>
        <end position="249"/>
    </location>
</feature>
<feature type="turn" evidence="11">
    <location>
        <begin position="252"/>
        <end position="254"/>
    </location>
</feature>
<feature type="helix" evidence="11">
    <location>
        <begin position="262"/>
        <end position="270"/>
    </location>
</feature>
<feature type="helix" evidence="11">
    <location>
        <begin position="274"/>
        <end position="286"/>
    </location>
</feature>
<feature type="turn" evidence="11">
    <location>
        <begin position="287"/>
        <end position="289"/>
    </location>
</feature>
<feature type="helix" evidence="11">
    <location>
        <begin position="290"/>
        <end position="306"/>
    </location>
</feature>
<feature type="helix" evidence="11">
    <location>
        <begin position="312"/>
        <end position="315"/>
    </location>
</feature>
<feature type="helix" evidence="11">
    <location>
        <begin position="324"/>
        <end position="339"/>
    </location>
</feature>
<feature type="helix" evidence="11">
    <location>
        <begin position="344"/>
        <end position="347"/>
    </location>
</feature>
<feature type="helix" evidence="11">
    <location>
        <begin position="351"/>
        <end position="376"/>
    </location>
</feature>
<feature type="strand" evidence="11">
    <location>
        <begin position="377"/>
        <end position="380"/>
    </location>
</feature>
<feature type="helix" evidence="11">
    <location>
        <begin position="381"/>
        <end position="383"/>
    </location>
</feature>
<feature type="turn" evidence="11">
    <location>
        <begin position="385"/>
        <end position="387"/>
    </location>
</feature>
<feature type="helix" evidence="11">
    <location>
        <begin position="388"/>
        <end position="404"/>
    </location>
</feature>
<feature type="helix" evidence="11">
    <location>
        <begin position="407"/>
        <end position="428"/>
    </location>
</feature>
<gene>
    <name type="primary">adiC</name>
    <name type="ordered locus">Z5717</name>
    <name type="ordered locus">ECs5097</name>
</gene>
<organism>
    <name type="scientific">Escherichia coli O157:H7</name>
    <dbReference type="NCBI Taxonomy" id="83334"/>
    <lineage>
        <taxon>Bacteria</taxon>
        <taxon>Pseudomonadati</taxon>
        <taxon>Pseudomonadota</taxon>
        <taxon>Gammaproteobacteria</taxon>
        <taxon>Enterobacterales</taxon>
        <taxon>Enterobacteriaceae</taxon>
        <taxon>Escherichia</taxon>
    </lineage>
</organism>
<evidence type="ECO:0000255" key="1"/>
<evidence type="ECO:0000269" key="2">
    <source>
    </source>
</evidence>
<evidence type="ECO:0000269" key="3">
    <source>
    </source>
</evidence>
<evidence type="ECO:0000269" key="4">
    <source>
    </source>
</evidence>
<evidence type="ECO:0000305" key="5"/>
<evidence type="ECO:0000305" key="6">
    <source>
    </source>
</evidence>
<evidence type="ECO:0000305" key="7">
    <source>
    </source>
</evidence>
<evidence type="ECO:0007744" key="8">
    <source>
        <dbReference type="PDB" id="3L1L"/>
    </source>
</evidence>
<evidence type="ECO:0007744" key="9">
    <source>
        <dbReference type="PDB" id="3LRB"/>
    </source>
</evidence>
<evidence type="ECO:0007744" key="10">
    <source>
        <dbReference type="PDB" id="3LRC"/>
    </source>
</evidence>
<evidence type="ECO:0007829" key="11">
    <source>
        <dbReference type="PDB" id="3L1L"/>
    </source>
</evidence>
<dbReference type="EMBL" id="AE005174">
    <property type="protein sequence ID" value="AAG59314.1"/>
    <property type="molecule type" value="Genomic_DNA"/>
</dbReference>
<dbReference type="EMBL" id="BA000007">
    <property type="protein sequence ID" value="BAB38520.1"/>
    <property type="molecule type" value="Genomic_DNA"/>
</dbReference>
<dbReference type="PIR" id="A91266">
    <property type="entry name" value="A91266"/>
</dbReference>
<dbReference type="PIR" id="F86106">
    <property type="entry name" value="F86106"/>
</dbReference>
<dbReference type="RefSeq" id="NP_313124.1">
    <property type="nucleotide sequence ID" value="NC_002695.1"/>
</dbReference>
<dbReference type="RefSeq" id="WP_000093154.1">
    <property type="nucleotide sequence ID" value="NZ_VOAI01000008.1"/>
</dbReference>
<dbReference type="PDB" id="3L1L">
    <property type="method" value="X-ray"/>
    <property type="resolution" value="3.00 A"/>
    <property type="chains" value="A=1-445"/>
</dbReference>
<dbReference type="PDB" id="3LRB">
    <property type="method" value="X-ray"/>
    <property type="resolution" value="3.61 A"/>
    <property type="chains" value="A/B=1-445"/>
</dbReference>
<dbReference type="PDB" id="3LRC">
    <property type="method" value="X-ray"/>
    <property type="resolution" value="4.00 A"/>
    <property type="chains" value="A/B/C/D=1-445"/>
</dbReference>
<dbReference type="PDBsum" id="3L1L"/>
<dbReference type="PDBsum" id="3LRB"/>
<dbReference type="PDBsum" id="3LRC"/>
<dbReference type="SMR" id="P60063"/>
<dbReference type="DIP" id="DIP-48684N"/>
<dbReference type="STRING" id="155864.Z5717"/>
<dbReference type="DrugBank" id="DB02451">
    <property type="generic name" value="B-nonylglucoside"/>
</dbReference>
<dbReference type="GeneID" id="914204"/>
<dbReference type="GeneID" id="93777720"/>
<dbReference type="KEGG" id="ece:Z5717"/>
<dbReference type="KEGG" id="ecs:ECs_5097"/>
<dbReference type="PATRIC" id="fig|386585.9.peg.5327"/>
<dbReference type="eggNOG" id="COG0531">
    <property type="taxonomic scope" value="Bacteria"/>
</dbReference>
<dbReference type="HOGENOM" id="CLU_007946_1_0_6"/>
<dbReference type="OMA" id="WVSNAAL"/>
<dbReference type="EvolutionaryTrace" id="P60063"/>
<dbReference type="Proteomes" id="UP000000558">
    <property type="component" value="Chromosome"/>
</dbReference>
<dbReference type="Proteomes" id="UP000002519">
    <property type="component" value="Chromosome"/>
</dbReference>
<dbReference type="GO" id="GO:0005886">
    <property type="term" value="C:plasma membrane"/>
    <property type="evidence" value="ECO:0007669"/>
    <property type="project" value="UniProtKB-SubCell"/>
</dbReference>
<dbReference type="GO" id="GO:0015297">
    <property type="term" value="F:antiporter activity"/>
    <property type="evidence" value="ECO:0007669"/>
    <property type="project" value="UniProtKB-KW"/>
</dbReference>
<dbReference type="GO" id="GO:0042802">
    <property type="term" value="F:identical protein binding"/>
    <property type="evidence" value="ECO:0000353"/>
    <property type="project" value="IntAct"/>
</dbReference>
<dbReference type="GO" id="GO:0006865">
    <property type="term" value="P:amino acid transport"/>
    <property type="evidence" value="ECO:0007669"/>
    <property type="project" value="UniProtKB-KW"/>
</dbReference>
<dbReference type="FunFam" id="1.20.1740.10:FF:000011">
    <property type="entry name" value="Arginine/agmatine antiporter"/>
    <property type="match status" value="1"/>
</dbReference>
<dbReference type="Gene3D" id="1.20.1740.10">
    <property type="entry name" value="Amino acid/polyamine transporter I"/>
    <property type="match status" value="1"/>
</dbReference>
<dbReference type="InterPro" id="IPR002293">
    <property type="entry name" value="AA/rel_permease1"/>
</dbReference>
<dbReference type="InterPro" id="IPR050367">
    <property type="entry name" value="APC_superfamily"/>
</dbReference>
<dbReference type="NCBIfam" id="NF007929">
    <property type="entry name" value="PRK10644.1"/>
    <property type="match status" value="1"/>
</dbReference>
<dbReference type="PANTHER" id="PTHR42770">
    <property type="entry name" value="AMINO ACID TRANSPORTER-RELATED"/>
    <property type="match status" value="1"/>
</dbReference>
<dbReference type="PANTHER" id="PTHR42770:SF18">
    <property type="entry name" value="ARGININE_AGMATINE ANTIPORTER"/>
    <property type="match status" value="1"/>
</dbReference>
<dbReference type="Pfam" id="PF13520">
    <property type="entry name" value="AA_permease_2"/>
    <property type="match status" value="1"/>
</dbReference>
<dbReference type="PIRSF" id="PIRSF006060">
    <property type="entry name" value="AA_transporter"/>
    <property type="match status" value="1"/>
</dbReference>
<protein>
    <recommendedName>
        <fullName>Arginine/agmatine antiporter</fullName>
    </recommendedName>
</protein>
<proteinExistence type="evidence at protein level"/>
<reference key="1">
    <citation type="journal article" date="2001" name="Nature">
        <title>Genome sequence of enterohaemorrhagic Escherichia coli O157:H7.</title>
        <authorList>
            <person name="Perna N.T."/>
            <person name="Plunkett G. III"/>
            <person name="Burland V."/>
            <person name="Mau B."/>
            <person name="Glasner J.D."/>
            <person name="Rose D.J."/>
            <person name="Mayhew G.F."/>
            <person name="Evans P.S."/>
            <person name="Gregor J."/>
            <person name="Kirkpatrick H.A."/>
            <person name="Posfai G."/>
            <person name="Hackett J."/>
            <person name="Klink S."/>
            <person name="Boutin A."/>
            <person name="Shao Y."/>
            <person name="Miller L."/>
            <person name="Grotbeck E.J."/>
            <person name="Davis N.W."/>
            <person name="Lim A."/>
            <person name="Dimalanta E.T."/>
            <person name="Potamousis K."/>
            <person name="Apodaca J."/>
            <person name="Anantharaman T.S."/>
            <person name="Lin J."/>
            <person name="Yen G."/>
            <person name="Schwartz D.C."/>
            <person name="Welch R.A."/>
            <person name="Blattner F.R."/>
        </authorList>
    </citation>
    <scope>NUCLEOTIDE SEQUENCE [LARGE SCALE GENOMIC DNA]</scope>
    <source>
        <strain>O157:H7 / EDL933 / ATCC 700927 / EHEC</strain>
    </source>
</reference>
<reference key="2">
    <citation type="journal article" date="2001" name="DNA Res.">
        <title>Complete genome sequence of enterohemorrhagic Escherichia coli O157:H7 and genomic comparison with a laboratory strain K-12.</title>
        <authorList>
            <person name="Hayashi T."/>
            <person name="Makino K."/>
            <person name="Ohnishi M."/>
            <person name="Kurokawa K."/>
            <person name="Ishii K."/>
            <person name="Yokoyama K."/>
            <person name="Han C.-G."/>
            <person name="Ohtsubo E."/>
            <person name="Nakayama K."/>
            <person name="Murata T."/>
            <person name="Tanaka M."/>
            <person name="Tobe T."/>
            <person name="Iida T."/>
            <person name="Takami H."/>
            <person name="Honda T."/>
            <person name="Sasakawa C."/>
            <person name="Ogasawara N."/>
            <person name="Yasunaga T."/>
            <person name="Kuhara S."/>
            <person name="Shiba T."/>
            <person name="Hattori M."/>
            <person name="Shinagawa H."/>
        </authorList>
    </citation>
    <scope>NUCLEOTIDE SEQUENCE [LARGE SCALE GENOMIC DNA]</scope>
    <source>
        <strain>O157:H7 / Sakai / RIMD 0509952 / EHEC</strain>
    </source>
</reference>
<reference key="3">
    <citation type="journal article" date="2014" name="Proc. Natl. Acad. Sci. U.S.A.">
        <title>Molecular mechanism of pH-dependent substrate transport by an arginine-agmatine antiporter.</title>
        <authorList>
            <person name="Wang S."/>
            <person name="Yan R."/>
            <person name="Zhang X."/>
            <person name="Chu Q."/>
            <person name="Shi Y."/>
        </authorList>
    </citation>
    <scope>FUNCTION</scope>
    <scope>CATALYTIC ACTIVITY</scope>
    <scope>BIOPHYSICOCHEMICAL PROPERTIES</scope>
    <scope>MUTAGENESIS OF TYR-74 AND PHE-337</scope>
    <source>
        <strain>O157:H7 / EHEC</strain>
    </source>
</reference>
<reference evidence="9 10" key="4">
    <citation type="journal article" date="2009" name="Science">
        <title>Structure and mechanism of an amino acid antiporter.</title>
        <authorList>
            <person name="Gao X."/>
            <person name="Lu F."/>
            <person name="Zhou L."/>
            <person name="Dang S."/>
            <person name="Sun L."/>
            <person name="Li X."/>
            <person name="Wang J."/>
            <person name="Shi Y."/>
        </authorList>
    </citation>
    <scope>X-RAY CRYSTALLOGRAPHY (3.61 ANGSTROMS) IN OUTWARD-OPEN CONFORMATION</scope>
    <scope>FUNCTION</scope>
    <scope>SUBUNIT</scope>
    <scope>SUBCELLULAR LOCATION</scope>
    <scope>SUBSTRATE-BINDING SITES</scope>
    <scope>DOMAIN</scope>
    <scope>MUTAGENESIS OF ASN-22; SER-26; TYR-87; TYR-93; GLU-208 AND TYR-365</scope>
    <source>
        <strain>O157:H7 / EHEC</strain>
    </source>
</reference>
<reference evidence="8" key="5">
    <citation type="journal article" date="2010" name="Nature">
        <title>Mechanism of substrate recognition and transport by an amino acid antiporter.</title>
        <authorList>
            <person name="Gao X."/>
            <person name="Zhou L."/>
            <person name="Jiao X."/>
            <person name="Lu F."/>
            <person name="Yan C."/>
            <person name="Zeng X."/>
            <person name="Wang J."/>
            <person name="Shi Y."/>
        </authorList>
    </citation>
    <scope>X-RAY CRYSTALLOGRAPHY (3.00 ANGSTROMS) IN OUTWARD-FACING OCCLUDED CONFORMATION IN COMPLEX WITH SUBSTRATE (ARG)</scope>
    <scope>SUBUNIT</scope>
    <scope>DOMAIN</scope>
    <scope>MUTAGENESIS OF ASN-22</scope>
    <source>
        <strain>O157:H7 / EHEC</strain>
    </source>
</reference>
<sequence length="445" mass="46843">MSSDADAHKVGLIPVTLMVSGNIMGSGVFLLPANLASTGGIAIYGWLVTIIGALGLSMVYAKMSFLDPSPGGSYAYARRCFGPFLGYQTNVLYWLACWIGNIAMVVIGVGYLSYFFPILKDPLVLTITCVVVLWIFVLLNIVGPKMITRVQAVATVLALIPIVGIAVFGWFWFRGETYMAAWNVSGLGTFGAIQSTLNVTLWSFIGVESASVAAGVVKNPKRNVPIATIGGVLIAAVCYVLSTTAIMGMIPNAALRVSASPFGDAARMALGDTAGAIVSFCAAAGCLGSLGGWTLLAGQTAKAAADDGLFPPIFARVNKAGTPVAGLIIVGILMTIFQLSSISPNATKEFGLVSSVSVIFTLVPYLYTCAALLLLGHGHFGKARPAYLAVTTIAFLYCIWAVVGSGAKEVMWSFVTLMVITAMYALNYNRLHKNPYPLDAPISKD</sequence>
<comment type="function">
    <text evidence="2 4 6 7">Major component of the acid-resistance (AR) system allowing enteric pathogens to survive the acidic environment in the stomach (Probable). Exchanges extracellular arginine for its intracellular decarboxylation product agmatine (Agm) thereby expelling intracellular protons (PubMed:19478139, PubMed:25136114). Probably undergoes several conformational states in order to translocate the substrate across the membrane; keeps the substrate accessible to only 1 side of the membrane at a time by opening and closing 3 membrane-internal gates (Probable).</text>
</comment>
<comment type="catalytic activity">
    <reaction evidence="2 4">
        <text>agmatine(in) + L-arginine(out) = agmatine(out) + L-arginine(in)</text>
        <dbReference type="Rhea" id="RHEA:29651"/>
        <dbReference type="ChEBI" id="CHEBI:32682"/>
        <dbReference type="ChEBI" id="CHEBI:58145"/>
    </reaction>
    <physiologicalReaction direction="left-to-right" evidence="4">
        <dbReference type="Rhea" id="RHEA:29652"/>
    </physiologicalReaction>
</comment>
<comment type="biophysicochemical properties">
    <kinetics>
        <Vmax evidence="4">1340.0 nmol/min/mg enzyme for Arg exchange at pH 6.0</Vmax>
        <Vmax evidence="4">51.0 nmol/min/mg enzyme for Arg exchange at pH 7.5</Vmax>
    </kinetics>
    <phDependence>
        <text evidence="4">Optimum pH is 5.5 or less for Arg-Agm exchange, which slows dramatically as pH rises and is almost undetectable at pH 7.0 and higher.</text>
    </phDependence>
</comment>
<comment type="subunit">
    <text evidence="2 3">Homodimer;each subunit has its own individual transport capacity.</text>
</comment>
<comment type="interaction">
    <interactant intactId="EBI-15829035">
        <id>P60063</id>
    </interactant>
    <interactant intactId="EBI-15829035">
        <id>P60063</id>
        <label>adiC</label>
    </interactant>
    <organismsDiffer>false</organismsDiffer>
    <experiments>3</experiments>
</comment>
<comment type="subcellular location">
    <subcellularLocation>
        <location evidence="6">Cell inner membrane</location>
        <topology evidence="2 3">Multi-pass membrane protein</topology>
    </subcellularLocation>
</comment>
<comment type="domain">
    <text evidence="2 3">Each subunit has 12 transmembrane (TM) domains, arranged with an internal layer (TM1, TM3, TM6, TM8 and TM10) surrounded by the outer layer (TM2, TM4, TM5, TM7, TM9, TM11 and TM12). TM1 and TM6 are interrupted by short, non-helical, Gly-containing loops in the middle of their transmembrane spans. Homodimerization is mediated by TM3, TM10, TM11 and TM12. Each subunit has a central cavity which binds substrates (PubMed:19478139). Upon Arg-binding the N-terminus of TM6 and Trp-202 move to prevent Arg from return to the periplasm (PubMed:20090677).</text>
</comment>
<comment type="similarity">
    <text evidence="5">Belongs to the amino acid-polyamine-organocation (APC) superfamily. Basic amino acid/polyamine antiporter (APA) (TC 2.A.3.2) family.</text>
</comment>
<name>ADIC_ECO57</name>
<keyword id="KW-0002">3D-structure</keyword>
<keyword id="KW-0029">Amino-acid transport</keyword>
<keyword id="KW-0050">Antiport</keyword>
<keyword id="KW-0997">Cell inner membrane</keyword>
<keyword id="KW-1003">Cell membrane</keyword>
<keyword id="KW-0472">Membrane</keyword>
<keyword id="KW-1185">Reference proteome</keyword>
<keyword id="KW-0812">Transmembrane</keyword>
<keyword id="KW-1133">Transmembrane helix</keyword>
<keyword id="KW-0813">Transport</keyword>
<accession>P60063</accession>
<accession>P39268</accession>
<accession>P39269</accession>